<proteinExistence type="evidence at protein level"/>
<feature type="signal peptide" evidence="1">
    <location>
        <begin position="1"/>
        <end position="21"/>
    </location>
</feature>
<feature type="chain" id="PRO_0000355249" description="Snaclec 2">
    <location>
        <begin position="22"/>
        <end position="156"/>
    </location>
</feature>
<feature type="domain" description="C-type lectin" evidence="2">
    <location>
        <begin position="32"/>
        <end position="151"/>
    </location>
</feature>
<feature type="disulfide bond" evidence="2">
    <location>
        <begin position="25"/>
        <end position="36"/>
    </location>
</feature>
<feature type="disulfide bond" evidence="2">
    <location>
        <begin position="53"/>
        <end position="150"/>
    </location>
</feature>
<feature type="disulfide bond" description="Interchain" evidence="2">
    <location>
        <position position="102"/>
    </location>
</feature>
<feature type="disulfide bond" evidence="2">
    <location>
        <begin position="125"/>
        <end position="142"/>
    </location>
</feature>
<organism>
    <name type="scientific">Bitis gabonica</name>
    <name type="common">Gaboon adder</name>
    <name type="synonym">Gaboon viper</name>
    <dbReference type="NCBI Taxonomy" id="8694"/>
    <lineage>
        <taxon>Eukaryota</taxon>
        <taxon>Metazoa</taxon>
        <taxon>Chordata</taxon>
        <taxon>Craniata</taxon>
        <taxon>Vertebrata</taxon>
        <taxon>Euteleostomi</taxon>
        <taxon>Lepidosauria</taxon>
        <taxon>Squamata</taxon>
        <taxon>Bifurcata</taxon>
        <taxon>Unidentata</taxon>
        <taxon>Episquamata</taxon>
        <taxon>Toxicofera</taxon>
        <taxon>Serpentes</taxon>
        <taxon>Colubroidea</taxon>
        <taxon>Viperidae</taxon>
        <taxon>Viperinae</taxon>
        <taxon>Bitis</taxon>
    </lineage>
</organism>
<keyword id="KW-0903">Direct protein sequencing</keyword>
<keyword id="KW-1015">Disulfide bond</keyword>
<keyword id="KW-1199">Hemostasis impairing toxin</keyword>
<keyword id="KW-0964">Secreted</keyword>
<keyword id="KW-0732">Signal</keyword>
<keyword id="KW-0800">Toxin</keyword>
<comment type="function">
    <text evidence="1">Interferes with one step of hemostasis (modulation of platelet aggregation, or coagulation cascade, for example).</text>
</comment>
<comment type="subunit">
    <text evidence="1">Heterodimer; disulfide-linked.</text>
</comment>
<comment type="subcellular location">
    <subcellularLocation>
        <location evidence="1">Secreted</location>
    </subcellularLocation>
</comment>
<comment type="tissue specificity">
    <text>Expressed by the venom gland.</text>
</comment>
<comment type="similarity">
    <text evidence="3">Belongs to the snaclec family.</text>
</comment>
<accession>Q6T7B6</accession>
<dbReference type="EMBL" id="AY429478">
    <property type="protein sequence ID" value="AAR06852.1"/>
    <property type="molecule type" value="mRNA"/>
</dbReference>
<dbReference type="SMR" id="Q6T7B6"/>
<dbReference type="GO" id="GO:0005576">
    <property type="term" value="C:extracellular region"/>
    <property type="evidence" value="ECO:0007669"/>
    <property type="project" value="UniProtKB-SubCell"/>
</dbReference>
<dbReference type="GO" id="GO:0090729">
    <property type="term" value="F:toxin activity"/>
    <property type="evidence" value="ECO:0007669"/>
    <property type="project" value="UniProtKB-KW"/>
</dbReference>
<dbReference type="FunFam" id="3.10.100.10:FF:000087">
    <property type="entry name" value="Snaclec rhodocetin subunit delta"/>
    <property type="match status" value="1"/>
</dbReference>
<dbReference type="Gene3D" id="3.10.100.10">
    <property type="entry name" value="Mannose-Binding Protein A, subunit A"/>
    <property type="match status" value="1"/>
</dbReference>
<dbReference type="InterPro" id="IPR001304">
    <property type="entry name" value="C-type_lectin-like"/>
</dbReference>
<dbReference type="InterPro" id="IPR016186">
    <property type="entry name" value="C-type_lectin-like/link_sf"/>
</dbReference>
<dbReference type="InterPro" id="IPR050111">
    <property type="entry name" value="C-type_lectin/snaclec_domain"/>
</dbReference>
<dbReference type="InterPro" id="IPR016187">
    <property type="entry name" value="CTDL_fold"/>
</dbReference>
<dbReference type="PANTHER" id="PTHR22803">
    <property type="entry name" value="MANNOSE, PHOSPHOLIPASE, LECTIN RECEPTOR RELATED"/>
    <property type="match status" value="1"/>
</dbReference>
<dbReference type="Pfam" id="PF00059">
    <property type="entry name" value="Lectin_C"/>
    <property type="match status" value="1"/>
</dbReference>
<dbReference type="PRINTS" id="PR01504">
    <property type="entry name" value="PNCREATITSAP"/>
</dbReference>
<dbReference type="SMART" id="SM00034">
    <property type="entry name" value="CLECT"/>
    <property type="match status" value="1"/>
</dbReference>
<dbReference type="SUPFAM" id="SSF56436">
    <property type="entry name" value="C-type lectin-like"/>
    <property type="match status" value="1"/>
</dbReference>
<dbReference type="PROSITE" id="PS50041">
    <property type="entry name" value="C_TYPE_LECTIN_2"/>
    <property type="match status" value="1"/>
</dbReference>
<evidence type="ECO:0000250" key="1"/>
<evidence type="ECO:0000255" key="2">
    <source>
        <dbReference type="PROSITE-ProRule" id="PRU00040"/>
    </source>
</evidence>
<evidence type="ECO:0000305" key="3"/>
<reference key="1">
    <citation type="journal article" date="2004" name="Gene">
        <title>Bitis gabonica (Gaboon viper) snake venom gland: toward a catalog for the full-length transcripts (cDNA) and proteins.</title>
        <authorList>
            <person name="Francischetti I.M.B."/>
            <person name="My-Pham V."/>
            <person name="Harrison J."/>
            <person name="Garfield M.K."/>
            <person name="Ribeiro J.M.C."/>
        </authorList>
    </citation>
    <scope>NUCLEOTIDE SEQUENCE [MRNA]</scope>
    <scope>PROTEIN SEQUENCE OF 22-41</scope>
    <source>
        <tissue>Venom</tissue>
        <tissue>Venom gland</tissue>
    </source>
</reference>
<sequence>MGRFIFLSSGLLVVFLSLSGADFECPSEWRPFDQHCYRAFDEPKRSADAEKFCSEQGNSGHLVSIQSKEEADFVAQLISDNIKSSPDYVWMGLWNQRREQYCSRKWTDGSNVIYKNVAERFTKNCFGLEKETEYRTWLNILCGDDYPFVCKFPPRC</sequence>
<name>SL2_BITGA</name>
<protein>
    <recommendedName>
        <fullName>Snaclec 2</fullName>
    </recommendedName>
    <alternativeName>
        <fullName>C-type lectin 2</fullName>
    </alternativeName>
</protein>